<proteinExistence type="predicted"/>
<accession>Q60319</accession>
<name>Y008_METJA</name>
<dbReference type="EMBL" id="L77117">
    <property type="protein sequence ID" value="AAB97997.1"/>
    <property type="molecule type" value="Genomic_DNA"/>
</dbReference>
<dbReference type="PIR" id="H64300">
    <property type="entry name" value="H64300"/>
</dbReference>
<dbReference type="SMR" id="Q60319"/>
<dbReference type="STRING" id="243232.MJ_0008"/>
<dbReference type="PaxDb" id="243232-MJ_0008"/>
<dbReference type="EnsemblBacteria" id="AAB97997">
    <property type="protein sequence ID" value="AAB97997"/>
    <property type="gene ID" value="MJ_0008"/>
</dbReference>
<dbReference type="KEGG" id="mja:MJ_0008"/>
<dbReference type="eggNOG" id="arCOG01899">
    <property type="taxonomic scope" value="Archaea"/>
</dbReference>
<dbReference type="HOGENOM" id="CLU_1264580_0_0_2"/>
<dbReference type="InParanoid" id="Q60319"/>
<dbReference type="OrthoDB" id="59344at2157"/>
<dbReference type="PhylomeDB" id="Q60319"/>
<dbReference type="Proteomes" id="UP000000805">
    <property type="component" value="Chromosome"/>
</dbReference>
<dbReference type="Gene3D" id="3.20.20.150">
    <property type="entry name" value="Divalent-metal-dependent TIM barrel enzymes"/>
    <property type="match status" value="1"/>
</dbReference>
<dbReference type="InterPro" id="IPR036237">
    <property type="entry name" value="Xyl_isomerase-like_sf"/>
</dbReference>
<dbReference type="InterPro" id="IPR013022">
    <property type="entry name" value="Xyl_isomerase-like_TIM-brl"/>
</dbReference>
<dbReference type="Pfam" id="PF01261">
    <property type="entry name" value="AP_endonuc_2"/>
    <property type="match status" value="1"/>
</dbReference>
<dbReference type="SUPFAM" id="SSF51658">
    <property type="entry name" value="Xylose isomerase-like"/>
    <property type="match status" value="1"/>
</dbReference>
<gene>
    <name type="ordered locus">MJ0008</name>
</gene>
<reference key="1">
    <citation type="journal article" date="1996" name="Science">
        <title>Complete genome sequence of the methanogenic archaeon, Methanococcus jannaschii.</title>
        <authorList>
            <person name="Bult C.J."/>
            <person name="White O."/>
            <person name="Olsen G.J."/>
            <person name="Zhou L."/>
            <person name="Fleischmann R.D."/>
            <person name="Sutton G.G."/>
            <person name="Blake J.A."/>
            <person name="FitzGerald L.M."/>
            <person name="Clayton R.A."/>
            <person name="Gocayne J.D."/>
            <person name="Kerlavage A.R."/>
            <person name="Dougherty B.A."/>
            <person name="Tomb J.-F."/>
            <person name="Adams M.D."/>
            <person name="Reich C.I."/>
            <person name="Overbeek R."/>
            <person name="Kirkness E.F."/>
            <person name="Weinstock K.G."/>
            <person name="Merrick J.M."/>
            <person name="Glodek A."/>
            <person name="Scott J.L."/>
            <person name="Geoghagen N.S.M."/>
            <person name="Weidman J.F."/>
            <person name="Fuhrmann J.L."/>
            <person name="Nguyen D."/>
            <person name="Utterback T.R."/>
            <person name="Kelley J.M."/>
            <person name="Peterson J.D."/>
            <person name="Sadow P.W."/>
            <person name="Hanna M.C."/>
            <person name="Cotton M.D."/>
            <person name="Roberts K.M."/>
            <person name="Hurst M.A."/>
            <person name="Kaine B.P."/>
            <person name="Borodovsky M."/>
            <person name="Klenk H.-P."/>
            <person name="Fraser C.M."/>
            <person name="Smith H.O."/>
            <person name="Woese C.R."/>
            <person name="Venter J.C."/>
        </authorList>
    </citation>
    <scope>NUCLEOTIDE SEQUENCE [LARGE SCALE GENOMIC DNA]</scope>
    <source>
        <strain>ATCC 43067 / DSM 2661 / JAL-1 / JCM 10045 / NBRC 100440</strain>
    </source>
</reference>
<sequence>MFCGSMIAICMRSKEGFLFNNKLMDWGLHYNPKIVKDNNIIGYHAPILDLDKKESIIILKNIIENIKGRDYLTIHLHNGKYGKINKETLIENLSIVNEFAEKNGIKLCIENLRKGFSSNPNNIIEIADEINCYITFDVGHIPYNRRLEFLEICSDRVYNSHVYEIEVDGKHLPPKNLNNLKPILDRLLDIKCKMFLIELMDIKEVLRTERMLKDYLEMYR</sequence>
<feature type="chain" id="PRO_0000106649" description="Uncharacterized protein MJ0008">
    <location>
        <begin position="1"/>
        <end position="220"/>
    </location>
</feature>
<protein>
    <recommendedName>
        <fullName>Uncharacterized protein MJ0008</fullName>
    </recommendedName>
</protein>
<keyword id="KW-1185">Reference proteome</keyword>
<organism>
    <name type="scientific">Methanocaldococcus jannaschii (strain ATCC 43067 / DSM 2661 / JAL-1 / JCM 10045 / NBRC 100440)</name>
    <name type="common">Methanococcus jannaschii</name>
    <dbReference type="NCBI Taxonomy" id="243232"/>
    <lineage>
        <taxon>Archaea</taxon>
        <taxon>Methanobacteriati</taxon>
        <taxon>Methanobacteriota</taxon>
        <taxon>Methanomada group</taxon>
        <taxon>Methanococci</taxon>
        <taxon>Methanococcales</taxon>
        <taxon>Methanocaldococcaceae</taxon>
        <taxon>Methanocaldococcus</taxon>
    </lineage>
</organism>